<comment type="subcellular location">
    <subcellularLocation>
        <location evidence="1">Cell inner membrane</location>
        <topology evidence="1">Multi-pass membrane protein</topology>
    </subcellularLocation>
</comment>
<feature type="chain" id="PRO_0000168601" description="Inner membrane protein YaiY">
    <location>
        <begin position="1"/>
        <end position="102"/>
    </location>
</feature>
<feature type="topological domain" description="Cytoplasmic" evidence="2">
    <location>
        <begin position="1"/>
        <end position="24"/>
    </location>
</feature>
<feature type="transmembrane region" description="Helical" evidence="2">
    <location>
        <begin position="25"/>
        <end position="45"/>
    </location>
</feature>
<feature type="topological domain" description="Periplasmic" evidence="2">
    <location>
        <begin position="46"/>
        <end position="74"/>
    </location>
</feature>
<feature type="transmembrane region" description="Helical" evidence="2">
    <location>
        <begin position="75"/>
        <end position="95"/>
    </location>
</feature>
<feature type="topological domain" description="Cytoplasmic" evidence="2">
    <location>
        <begin position="96"/>
        <end position="102"/>
    </location>
</feature>
<accession>P0AAP8</accession>
<accession>P77669</accession>
<evidence type="ECO:0000250" key="1"/>
<evidence type="ECO:0000255" key="2"/>
<name>YAIY_ECOL6</name>
<gene>
    <name type="primary">yaiY</name>
    <name type="ordered locus">c0484</name>
</gene>
<protein>
    <recommendedName>
        <fullName>Inner membrane protein YaiY</fullName>
    </recommendedName>
</protein>
<dbReference type="EMBL" id="AE014075">
    <property type="protein sequence ID" value="AAN78962.1"/>
    <property type="molecule type" value="Genomic_DNA"/>
</dbReference>
<dbReference type="RefSeq" id="WP_000763151.1">
    <property type="nucleotide sequence ID" value="NZ_CP051263.1"/>
</dbReference>
<dbReference type="KEGG" id="ecc:c0484"/>
<dbReference type="eggNOG" id="ENOG5032S6F">
    <property type="taxonomic scope" value="Bacteria"/>
</dbReference>
<dbReference type="HOGENOM" id="CLU_180695_0_0_6"/>
<dbReference type="BioCyc" id="ECOL199310:C0484-MONOMER"/>
<dbReference type="Proteomes" id="UP000001410">
    <property type="component" value="Chromosome"/>
</dbReference>
<dbReference type="GO" id="GO:0005886">
    <property type="term" value="C:plasma membrane"/>
    <property type="evidence" value="ECO:0007669"/>
    <property type="project" value="UniProtKB-SubCell"/>
</dbReference>
<dbReference type="InterPro" id="IPR020513">
    <property type="entry name" value="Uncharacterised_IM_YaiY"/>
</dbReference>
<dbReference type="Pfam" id="PF10954">
    <property type="entry name" value="DUF2755"/>
    <property type="match status" value="1"/>
</dbReference>
<proteinExistence type="inferred from homology"/>
<reference key="1">
    <citation type="journal article" date="2002" name="Proc. Natl. Acad. Sci. U.S.A.">
        <title>Extensive mosaic structure revealed by the complete genome sequence of uropathogenic Escherichia coli.</title>
        <authorList>
            <person name="Welch R.A."/>
            <person name="Burland V."/>
            <person name="Plunkett G. III"/>
            <person name="Redford P."/>
            <person name="Roesch P."/>
            <person name="Rasko D."/>
            <person name="Buckles E.L."/>
            <person name="Liou S.-R."/>
            <person name="Boutin A."/>
            <person name="Hackett J."/>
            <person name="Stroud D."/>
            <person name="Mayhew G.F."/>
            <person name="Rose D.J."/>
            <person name="Zhou S."/>
            <person name="Schwartz D.C."/>
            <person name="Perna N.T."/>
            <person name="Mobley H.L.T."/>
            <person name="Donnenberg M.S."/>
            <person name="Blattner F.R."/>
        </authorList>
    </citation>
    <scope>NUCLEOTIDE SEQUENCE [LARGE SCALE GENOMIC DNA]</scope>
    <source>
        <strain>CFT073 / ATCC 700928 / UPEC</strain>
    </source>
</reference>
<sequence length="102" mass="11424">MADFTLSKSLFSGKYRNASSTPGNIAYALFVLFCFWAGAQLLNLLVHAPGVYERLMQVQETGRPRVEIGLGVGTIFGLIPFLVGCLIFAVVALWLHWRHRRQ</sequence>
<keyword id="KW-0997">Cell inner membrane</keyword>
<keyword id="KW-1003">Cell membrane</keyword>
<keyword id="KW-0472">Membrane</keyword>
<keyword id="KW-1185">Reference proteome</keyword>
<keyword id="KW-0812">Transmembrane</keyword>
<keyword id="KW-1133">Transmembrane helix</keyword>
<organism>
    <name type="scientific">Escherichia coli O6:H1 (strain CFT073 / ATCC 700928 / UPEC)</name>
    <dbReference type="NCBI Taxonomy" id="199310"/>
    <lineage>
        <taxon>Bacteria</taxon>
        <taxon>Pseudomonadati</taxon>
        <taxon>Pseudomonadota</taxon>
        <taxon>Gammaproteobacteria</taxon>
        <taxon>Enterobacterales</taxon>
        <taxon>Enterobacteriaceae</taxon>
        <taxon>Escherichia</taxon>
    </lineage>
</organism>